<sequence>MAVIDQHQDDFSNVSWNTDEHTAAESSSSVTATEFDDTERNGHNAYESDAPGSDGQEVLDCVVSEPLKENDGSKDTFVSYLITTNTTFPSFQRSQTTVRRRFTDFVFLYKALSRDYPTAAVPPLPDKQRMEYVSGNRFGPDFTNRRAHSLQRFLNRLSLHPVLRRADILHIFLESPDWNATMRSRSVRGSTSSDTGSSGVFDNLTDSFLNAFTKAHKHDKRFLEVRERSDKLDEDLAHIEKVVARVARRENDIELDFKDLAEQFQKLITLEPGVENEVRHFANSIEDTAMGLRKLKDVTDGDYLGSLRDMQAYSTALKSLLKAREQKQVDYEQLTEYLNKNTVDRDQLQSGQGSSGLSGASGRLMRKLEDVRGVDHEQARRDRQRKLEMNIDKLTTEAERAKKTSEMFDDEVVKEVADFERIKRVEFKKQLGGLADSQIEFYDEVTEIWEGYVKAMEKEGVSGTRSTGVEPPGRRLAD</sequence>
<accession>A0A1B7YDZ4</accession>
<feature type="chain" id="PRO_0000461188" description="Sorting nexin-4">
    <location>
        <begin position="1"/>
        <end position="478"/>
    </location>
</feature>
<feature type="domain" description="PX" evidence="5">
    <location>
        <begin position="58"/>
        <end position="180"/>
    </location>
</feature>
<feature type="region of interest" description="Disordered" evidence="6">
    <location>
        <begin position="1"/>
        <end position="56"/>
    </location>
</feature>
<feature type="region of interest" description="Disordered" evidence="6">
    <location>
        <begin position="459"/>
        <end position="478"/>
    </location>
</feature>
<feature type="compositionally biased region" description="Basic and acidic residues" evidence="6">
    <location>
        <begin position="1"/>
        <end position="10"/>
    </location>
</feature>
<feature type="compositionally biased region" description="Low complexity" evidence="6">
    <location>
        <begin position="24"/>
        <end position="33"/>
    </location>
</feature>
<feature type="binding site" evidence="2">
    <location>
        <position position="101"/>
    </location>
    <ligand>
        <name>a 1,2-diacyl-sn-glycero-3-phospho-(1D-myo-inositol-3-phosphate)</name>
        <dbReference type="ChEBI" id="CHEBI:58088"/>
    </ligand>
</feature>
<feature type="binding site" evidence="4">
    <location>
        <position position="103"/>
    </location>
    <ligand>
        <name>a 1,2-diacyl-sn-glycero-3-phospho-(1D-myo-inositol-3-phosphate)</name>
        <dbReference type="ChEBI" id="CHEBI:58088"/>
    </ligand>
</feature>
<feature type="binding site" evidence="4">
    <location>
        <position position="127"/>
    </location>
    <ligand>
        <name>a 1,2-diacyl-sn-glycero-3-phospho-(1D-myo-inositol-3-phosphate)</name>
        <dbReference type="ChEBI" id="CHEBI:58088"/>
    </ligand>
</feature>
<feature type="binding site" evidence="3">
    <location>
        <position position="146"/>
    </location>
    <ligand>
        <name>a 1,2-diacyl-sn-glycero-3-phospho-(1D-myo-inositol-3-phosphate)</name>
        <dbReference type="ChEBI" id="CHEBI:58088"/>
    </ligand>
</feature>
<organism evidence="12">
    <name type="scientific">Colletotrichum higginsianum (strain IMI 349063)</name>
    <name type="common">Crucifer anthracnose fungus</name>
    <dbReference type="NCBI Taxonomy" id="759273"/>
    <lineage>
        <taxon>Eukaryota</taxon>
        <taxon>Fungi</taxon>
        <taxon>Dikarya</taxon>
        <taxon>Ascomycota</taxon>
        <taxon>Pezizomycotina</taxon>
        <taxon>Sordariomycetes</taxon>
        <taxon>Hypocreomycetidae</taxon>
        <taxon>Glomerellales</taxon>
        <taxon>Glomerellaceae</taxon>
        <taxon>Colletotrichum</taxon>
        <taxon>Colletotrichum destructivum species complex</taxon>
    </lineage>
</organism>
<protein>
    <recommendedName>
        <fullName evidence="1">Sorting nexin-4</fullName>
    </recommendedName>
    <alternativeName>
        <fullName evidence="1">Autophagy-related protein 24</fullName>
    </alternativeName>
    <alternativeName>
        <fullName evidence="8">ChATG24</fullName>
    </alternativeName>
</protein>
<gene>
    <name evidence="8" type="primary">ATG24</name>
    <name evidence="9" type="synonym">SNX4</name>
    <name evidence="11" type="ORF">CH63R_05934</name>
</gene>
<proteinExistence type="evidence at protein level"/>
<name>SNX4_COLHI</name>
<comment type="function">
    <text evidence="1 7">Sorting nexin, involved in the separation or division of vacuoles throughout the entire life cycle of the cells (By similarity). Involved in retrieval of late-Golgi SNAREs from post-Golgi endosomes to the trans-Golgi network, for cytoplasm to vacuole transport (Cvt), and autophagy of large cargos including mitophagy, pexophagy and glycophagy (PubMed:35835849). Required for the switch to necrotrophic growth (PubMed:35835849).</text>
</comment>
<comment type="subunit">
    <text evidence="7">Interacts with the mitochondrial prohibitin complex subunits PHB1 and PHB2; the interaction is direct and plays a role in mitophagy.</text>
</comment>
<comment type="subcellular location">
    <subcellularLocation>
        <location evidence="1">Cytoplasm</location>
        <location evidence="1">Cytosol</location>
    </subcellularLocation>
    <subcellularLocation>
        <location evidence="1">Preautophagosomal structure membrane</location>
        <topology evidence="1">Peripheral membrane protein</topology>
    </subcellularLocation>
    <subcellularLocation>
        <location evidence="1">Endosome membrane</location>
        <topology evidence="1">Peripheral membrane protein</topology>
    </subcellularLocation>
    <subcellularLocation>
        <location evidence="10">Mitochondrion membrane</location>
        <topology evidence="9">Peripheral membrane protein</topology>
    </subcellularLocation>
    <subcellularLocation>
        <location evidence="7">Lipid droplet</location>
    </subcellularLocation>
    <text evidence="1 7">Endosome and other perivacuolar punctate structures. Associates to phosphatidylinositol 3-phosphate, necessary for peripheral membrane localization to the perivacuolar punctate structures (By similarity). Found at lipid droplets and mitochondria during nitrogen starvation (PubMed:35835849).</text>
</comment>
<comment type="induction">
    <text evidence="7">Induced during nitrogen starvation (at protein level).</text>
</comment>
<comment type="domain">
    <text evidence="4">The PX domain binds phosphatidylinositol 3-phosphate which is necessary for peripheral membrane localization to the perivacuolar punctate structures.</text>
</comment>
<comment type="disruption phenotype">
    <text evidence="7">Abrogates mitophagy (PubMed:35835849). Decreases formation of secondary hyphae (PubMed:35835849). Decreases colony growth and reduces conidial production (PubMed:35835849). Decreases virulence on A.thaliana (PubMed:35835849).</text>
</comment>
<comment type="similarity">
    <text evidence="9">Belongs to the sorting nexin family.</text>
</comment>
<dbReference type="EMBL" id="LTAN01000004">
    <property type="protein sequence ID" value="OBR10242.1"/>
    <property type="molecule type" value="Genomic_DNA"/>
</dbReference>
<dbReference type="RefSeq" id="XP_018158759.1">
    <property type="nucleotide sequence ID" value="XM_018300909.1"/>
</dbReference>
<dbReference type="SMR" id="A0A1B7YDZ4"/>
<dbReference type="GeneID" id="28865016"/>
<dbReference type="KEGG" id="chig:CH63R_05934"/>
<dbReference type="VEuPathDB" id="FungiDB:CH63R_05934"/>
<dbReference type="OrthoDB" id="27711at1028384"/>
<dbReference type="Proteomes" id="UP000092177">
    <property type="component" value="Chromosome 4"/>
</dbReference>
<dbReference type="GO" id="GO:0005829">
    <property type="term" value="C:cytosol"/>
    <property type="evidence" value="ECO:0007669"/>
    <property type="project" value="UniProtKB-SubCell"/>
</dbReference>
<dbReference type="GO" id="GO:0005769">
    <property type="term" value="C:early endosome"/>
    <property type="evidence" value="ECO:0007669"/>
    <property type="project" value="TreeGrafter"/>
</dbReference>
<dbReference type="GO" id="GO:0010008">
    <property type="term" value="C:endosome membrane"/>
    <property type="evidence" value="ECO:0007669"/>
    <property type="project" value="UniProtKB-SubCell"/>
</dbReference>
<dbReference type="GO" id="GO:0005811">
    <property type="term" value="C:lipid droplet"/>
    <property type="evidence" value="ECO:0000314"/>
    <property type="project" value="UniProtKB"/>
</dbReference>
<dbReference type="GO" id="GO:0031966">
    <property type="term" value="C:mitochondrial membrane"/>
    <property type="evidence" value="ECO:0007669"/>
    <property type="project" value="UniProtKB-SubCell"/>
</dbReference>
<dbReference type="GO" id="GO:0005739">
    <property type="term" value="C:mitochondrion"/>
    <property type="evidence" value="ECO:0000314"/>
    <property type="project" value="UniProtKB"/>
</dbReference>
<dbReference type="GO" id="GO:0034045">
    <property type="term" value="C:phagophore assembly site membrane"/>
    <property type="evidence" value="ECO:0007669"/>
    <property type="project" value="UniProtKB-SubCell"/>
</dbReference>
<dbReference type="GO" id="GO:0035091">
    <property type="term" value="F:phosphatidylinositol binding"/>
    <property type="evidence" value="ECO:0007669"/>
    <property type="project" value="InterPro"/>
</dbReference>
<dbReference type="GO" id="GO:0032456">
    <property type="term" value="P:endocytic recycling"/>
    <property type="evidence" value="ECO:0007669"/>
    <property type="project" value="TreeGrafter"/>
</dbReference>
<dbReference type="GO" id="GO:0000423">
    <property type="term" value="P:mitophagy"/>
    <property type="evidence" value="ECO:0000315"/>
    <property type="project" value="UniProtKB"/>
</dbReference>
<dbReference type="GO" id="GO:0034727">
    <property type="term" value="P:piecemeal microautophagy of the nucleus"/>
    <property type="evidence" value="ECO:0007669"/>
    <property type="project" value="TreeGrafter"/>
</dbReference>
<dbReference type="GO" id="GO:0015031">
    <property type="term" value="P:protein transport"/>
    <property type="evidence" value="ECO:0007669"/>
    <property type="project" value="TreeGrafter"/>
</dbReference>
<dbReference type="GO" id="GO:0061709">
    <property type="term" value="P:reticulophagy"/>
    <property type="evidence" value="ECO:0007669"/>
    <property type="project" value="TreeGrafter"/>
</dbReference>
<dbReference type="CDD" id="cd07628">
    <property type="entry name" value="BAR_Atg24p"/>
    <property type="match status" value="1"/>
</dbReference>
<dbReference type="CDD" id="cd06863">
    <property type="entry name" value="PX_Atg24p"/>
    <property type="match status" value="1"/>
</dbReference>
<dbReference type="FunFam" id="3.30.1520.10:FF:000035">
    <property type="entry name" value="Sorting nexin-4 protein"/>
    <property type="match status" value="1"/>
</dbReference>
<dbReference type="FunFam" id="1.20.1270.60:FF:000042">
    <property type="entry name" value="Vacuolar targeting protein Atg24"/>
    <property type="match status" value="1"/>
</dbReference>
<dbReference type="Gene3D" id="1.20.1270.60">
    <property type="entry name" value="Arfaptin homology (AH) domain/BAR domain"/>
    <property type="match status" value="1"/>
</dbReference>
<dbReference type="Gene3D" id="3.30.1520.10">
    <property type="entry name" value="Phox-like domain"/>
    <property type="match status" value="1"/>
</dbReference>
<dbReference type="InterPro" id="IPR027267">
    <property type="entry name" value="AH/BAR_dom_sf"/>
</dbReference>
<dbReference type="InterPro" id="IPR001683">
    <property type="entry name" value="PX_dom"/>
</dbReference>
<dbReference type="InterPro" id="IPR036871">
    <property type="entry name" value="PX_dom_sf"/>
</dbReference>
<dbReference type="PANTHER" id="PTHR45949">
    <property type="entry name" value="SORTING NEXIN-4"/>
    <property type="match status" value="1"/>
</dbReference>
<dbReference type="PANTHER" id="PTHR45949:SF2">
    <property type="entry name" value="SORTING NEXIN-4"/>
    <property type="match status" value="1"/>
</dbReference>
<dbReference type="Pfam" id="PF00787">
    <property type="entry name" value="PX"/>
    <property type="match status" value="1"/>
</dbReference>
<dbReference type="SMART" id="SM00312">
    <property type="entry name" value="PX"/>
    <property type="match status" value="1"/>
</dbReference>
<dbReference type="SUPFAM" id="SSF103657">
    <property type="entry name" value="BAR/IMD domain-like"/>
    <property type="match status" value="1"/>
</dbReference>
<dbReference type="SUPFAM" id="SSF64268">
    <property type="entry name" value="PX domain"/>
    <property type="match status" value="1"/>
</dbReference>
<dbReference type="PROSITE" id="PS50195">
    <property type="entry name" value="PX"/>
    <property type="match status" value="1"/>
</dbReference>
<evidence type="ECO:0000250" key="1">
    <source>
        <dbReference type="UniProtKB" id="P47057"/>
    </source>
</evidence>
<evidence type="ECO:0000250" key="2">
    <source>
        <dbReference type="UniProtKB" id="Q3UR97"/>
    </source>
</evidence>
<evidence type="ECO:0000250" key="3">
    <source>
        <dbReference type="UniProtKB" id="Q6P4T1"/>
    </source>
</evidence>
<evidence type="ECO:0000250" key="4">
    <source>
        <dbReference type="UniProtKB" id="Q96L94"/>
    </source>
</evidence>
<evidence type="ECO:0000255" key="5">
    <source>
        <dbReference type="PROSITE-ProRule" id="PRU00147"/>
    </source>
</evidence>
<evidence type="ECO:0000256" key="6">
    <source>
        <dbReference type="SAM" id="MobiDB-lite"/>
    </source>
</evidence>
<evidence type="ECO:0000269" key="7">
    <source>
    </source>
</evidence>
<evidence type="ECO:0000303" key="8">
    <source>
    </source>
</evidence>
<evidence type="ECO:0000305" key="9"/>
<evidence type="ECO:0000305" key="10">
    <source>
    </source>
</evidence>
<evidence type="ECO:0000312" key="11">
    <source>
        <dbReference type="EMBL" id="OBR10242.1"/>
    </source>
</evidence>
<evidence type="ECO:0000312" key="12">
    <source>
        <dbReference type="Proteomes" id="UP000092177"/>
    </source>
</evidence>
<keyword id="KW-0072">Autophagy</keyword>
<keyword id="KW-0963">Cytoplasm</keyword>
<keyword id="KW-0967">Endosome</keyword>
<keyword id="KW-0551">Lipid droplet</keyword>
<keyword id="KW-0446">Lipid-binding</keyword>
<keyword id="KW-0472">Membrane</keyword>
<keyword id="KW-0496">Mitochondrion</keyword>
<keyword id="KW-1185">Reference proteome</keyword>
<keyword id="KW-0813">Transport</keyword>
<reference evidence="12" key="1">
    <citation type="journal article" date="2017" name="BMC Genomics">
        <title>Gapless genome assembly of Colletotrichum higginsianum reveals chromosome structure and association of transposable elements with secondary metabolite gene clusters.</title>
        <authorList>
            <person name="Dallery J.-F."/>
            <person name="Lapalu N."/>
            <person name="Zampounis A."/>
            <person name="Pigne S."/>
            <person name="Luyten I."/>
            <person name="Amselem J."/>
            <person name="Wittenberg A.H.J."/>
            <person name="Zhou S."/>
            <person name="de Queiroz M.V."/>
            <person name="Robin G.P."/>
            <person name="Auger A."/>
            <person name="Hainaut M."/>
            <person name="Henrissat B."/>
            <person name="Kim K.-T."/>
            <person name="Lee Y.-H."/>
            <person name="Lespinet O."/>
            <person name="Schwartz D.C."/>
            <person name="Thon M.R."/>
            <person name="O'Connell R.J."/>
        </authorList>
    </citation>
    <scope>NUCLEOTIDE SEQUENCE [LARGE SCALE GENOMIC DNA]</scope>
    <source>
        <strain evidence="12">IMI 349063</strain>
    </source>
</reference>
<reference evidence="9" key="2">
    <citation type="journal article" date="2022" name="Commun. Biol.">
        <title>Mitochondrial prohibitin complex regulates fungal virulence via ATG24-assisted mitophagy.</title>
        <authorList>
            <person name="Yan Y."/>
            <person name="Tang J."/>
            <person name="Yuan Q."/>
            <person name="Liu C."/>
            <person name="Chen X."/>
            <person name="Liu H."/>
            <person name="Huang J."/>
            <person name="Bao C."/>
            <person name="Hsiang T."/>
            <person name="Zheng L."/>
        </authorList>
    </citation>
    <scope>FUNCTION</scope>
    <scope>INTERACTION WITH PHB1 AND PHB2</scope>
    <scope>SUBCELLULAR LOCATION</scope>
    <scope>INDUCTION</scope>
    <scope>DISRUPTION PHENOTYPE</scope>
</reference>